<sequence length="336" mass="36732">MPKTETYPRLLADIGGTNARFGLEVAPRQIECIEVLRCEDFESLSDAVRFYLSKCKESLKLHPIYGSFAVATPIMGDFVQMTNNHWTFSIETTRQCLTLKKLLVINDFVAQAYAISAMQENDLAQIGGIKCEINAPKAILGPGTGLGVSTLIQNSDGSLKVLPGEGGHVSFAPFDDLEILVWQYARSKFNHVSAERFLSGSGLVLIYEALSKRKGLEKVAKLSKAELTPQIISERALNGDYPICRLTLDTFCSMLGTLAADVALTLGARGGVYLCGGIIPRFIDYFKTSPFRARFETKGRMGAFLASIPVHVVMKKTPGLDGAGIALENYLLHDKI</sequence>
<proteinExistence type="inferred from homology"/>
<protein>
    <recommendedName>
        <fullName evidence="1">Glucokinase</fullName>
        <ecNumber evidence="1">2.7.1.2</ecNumber>
    </recommendedName>
    <alternativeName>
        <fullName evidence="1">Glucose kinase</fullName>
    </alternativeName>
</protein>
<keyword id="KW-0067">ATP-binding</keyword>
<keyword id="KW-0963">Cytoplasm</keyword>
<keyword id="KW-0324">Glycolysis</keyword>
<keyword id="KW-0418">Kinase</keyword>
<keyword id="KW-0547">Nucleotide-binding</keyword>
<keyword id="KW-0808">Transferase</keyword>
<reference key="1">
    <citation type="journal article" date="2006" name="Proc. Natl. Acad. Sci. U.S.A.">
        <title>The complete genome sequence of a chronic atrophic gastritis Helicobacter pylori strain: evolution during disease progression.</title>
        <authorList>
            <person name="Oh J.D."/>
            <person name="Kling-Baeckhed H."/>
            <person name="Giannakis M."/>
            <person name="Xu J."/>
            <person name="Fulton R.S."/>
            <person name="Fulton L.A."/>
            <person name="Cordum H.S."/>
            <person name="Wang C."/>
            <person name="Elliott G."/>
            <person name="Edwards J."/>
            <person name="Mardis E.R."/>
            <person name="Engstrand L.G."/>
            <person name="Gordon J.I."/>
        </authorList>
    </citation>
    <scope>NUCLEOTIDE SEQUENCE [LARGE SCALE GENOMIC DNA]</scope>
    <source>
        <strain>HPAG1</strain>
    </source>
</reference>
<name>GLK_HELPH</name>
<evidence type="ECO:0000255" key="1">
    <source>
        <dbReference type="HAMAP-Rule" id="MF_00524"/>
    </source>
</evidence>
<organism>
    <name type="scientific">Helicobacter pylori (strain HPAG1)</name>
    <dbReference type="NCBI Taxonomy" id="357544"/>
    <lineage>
        <taxon>Bacteria</taxon>
        <taxon>Pseudomonadati</taxon>
        <taxon>Campylobacterota</taxon>
        <taxon>Epsilonproteobacteria</taxon>
        <taxon>Campylobacterales</taxon>
        <taxon>Helicobacteraceae</taxon>
        <taxon>Helicobacter</taxon>
    </lineage>
</organism>
<dbReference type="EC" id="2.7.1.2" evidence="1"/>
<dbReference type="EMBL" id="CP000241">
    <property type="protein sequence ID" value="ABF85108.1"/>
    <property type="molecule type" value="Genomic_DNA"/>
</dbReference>
<dbReference type="RefSeq" id="WP_001126889.1">
    <property type="nucleotide sequence ID" value="NC_008086.1"/>
</dbReference>
<dbReference type="SMR" id="Q1CSG4"/>
<dbReference type="KEGG" id="hpa:HPAG1_1041"/>
<dbReference type="HOGENOM" id="CLU_042582_1_0_7"/>
<dbReference type="GO" id="GO:0005829">
    <property type="term" value="C:cytosol"/>
    <property type="evidence" value="ECO:0007669"/>
    <property type="project" value="TreeGrafter"/>
</dbReference>
<dbReference type="GO" id="GO:0005524">
    <property type="term" value="F:ATP binding"/>
    <property type="evidence" value="ECO:0007669"/>
    <property type="project" value="UniProtKB-UniRule"/>
</dbReference>
<dbReference type="GO" id="GO:0005536">
    <property type="term" value="F:D-glucose binding"/>
    <property type="evidence" value="ECO:0007669"/>
    <property type="project" value="InterPro"/>
</dbReference>
<dbReference type="GO" id="GO:0004340">
    <property type="term" value="F:glucokinase activity"/>
    <property type="evidence" value="ECO:0007669"/>
    <property type="project" value="UniProtKB-UniRule"/>
</dbReference>
<dbReference type="GO" id="GO:0006096">
    <property type="term" value="P:glycolytic process"/>
    <property type="evidence" value="ECO:0007669"/>
    <property type="project" value="UniProtKB-UniRule"/>
</dbReference>
<dbReference type="CDD" id="cd24008">
    <property type="entry name" value="ASKHA_NBD_GLK"/>
    <property type="match status" value="1"/>
</dbReference>
<dbReference type="FunFam" id="3.40.367.20:FF:000002">
    <property type="entry name" value="Glucokinase"/>
    <property type="match status" value="1"/>
</dbReference>
<dbReference type="Gene3D" id="3.30.420.40">
    <property type="match status" value="1"/>
</dbReference>
<dbReference type="Gene3D" id="3.40.367.20">
    <property type="match status" value="1"/>
</dbReference>
<dbReference type="HAMAP" id="MF_00524">
    <property type="entry name" value="Glucokinase"/>
    <property type="match status" value="1"/>
</dbReference>
<dbReference type="InterPro" id="IPR043129">
    <property type="entry name" value="ATPase_NBD"/>
</dbReference>
<dbReference type="InterPro" id="IPR050201">
    <property type="entry name" value="Bacterial_glucokinase"/>
</dbReference>
<dbReference type="InterPro" id="IPR003836">
    <property type="entry name" value="Glucokinase"/>
</dbReference>
<dbReference type="NCBIfam" id="TIGR00749">
    <property type="entry name" value="glk"/>
    <property type="match status" value="1"/>
</dbReference>
<dbReference type="NCBIfam" id="NF001416">
    <property type="entry name" value="PRK00292.1-3"/>
    <property type="match status" value="1"/>
</dbReference>
<dbReference type="PANTHER" id="PTHR47690">
    <property type="entry name" value="GLUCOKINASE"/>
    <property type="match status" value="1"/>
</dbReference>
<dbReference type="PANTHER" id="PTHR47690:SF1">
    <property type="entry name" value="GLUCOKINASE"/>
    <property type="match status" value="1"/>
</dbReference>
<dbReference type="Pfam" id="PF02685">
    <property type="entry name" value="Glucokinase"/>
    <property type="match status" value="1"/>
</dbReference>
<dbReference type="SUPFAM" id="SSF53067">
    <property type="entry name" value="Actin-like ATPase domain"/>
    <property type="match status" value="1"/>
</dbReference>
<accession>Q1CSG4</accession>
<feature type="chain" id="PRO_0000268775" description="Glucokinase">
    <location>
        <begin position="1"/>
        <end position="336"/>
    </location>
</feature>
<feature type="binding site" evidence="1">
    <location>
        <begin position="12"/>
        <end position="17"/>
    </location>
    <ligand>
        <name>ATP</name>
        <dbReference type="ChEBI" id="CHEBI:30616"/>
    </ligand>
</feature>
<comment type="catalytic activity">
    <reaction evidence="1">
        <text>D-glucose + ATP = D-glucose 6-phosphate + ADP + H(+)</text>
        <dbReference type="Rhea" id="RHEA:17825"/>
        <dbReference type="ChEBI" id="CHEBI:4167"/>
        <dbReference type="ChEBI" id="CHEBI:15378"/>
        <dbReference type="ChEBI" id="CHEBI:30616"/>
        <dbReference type="ChEBI" id="CHEBI:61548"/>
        <dbReference type="ChEBI" id="CHEBI:456216"/>
        <dbReference type="EC" id="2.7.1.2"/>
    </reaction>
</comment>
<comment type="subcellular location">
    <subcellularLocation>
        <location evidence="1">Cytoplasm</location>
    </subcellularLocation>
</comment>
<comment type="similarity">
    <text evidence="1">Belongs to the bacterial glucokinase family.</text>
</comment>
<gene>
    <name evidence="1" type="primary">glk</name>
    <name type="ordered locus">HPAG1_1041</name>
</gene>